<protein>
    <recommendedName>
        <fullName evidence="1">Putative 3-methyladenine DNA glycosylase</fullName>
        <ecNumber evidence="1">3.2.2.-</ecNumber>
    </recommendedName>
</protein>
<accession>Q9RSQ0</accession>
<organism>
    <name type="scientific">Deinococcus radiodurans (strain ATCC 13939 / DSM 20539 / JCM 16871 / CCUG 27074 / LMG 4051 / NBRC 15346 / NCIMB 9279 / VKM B-1422 / R1)</name>
    <dbReference type="NCBI Taxonomy" id="243230"/>
    <lineage>
        <taxon>Bacteria</taxon>
        <taxon>Thermotogati</taxon>
        <taxon>Deinococcota</taxon>
        <taxon>Deinococci</taxon>
        <taxon>Deinococcales</taxon>
        <taxon>Deinococcaceae</taxon>
        <taxon>Deinococcus</taxon>
    </lineage>
</organism>
<keyword id="KW-0227">DNA damage</keyword>
<keyword id="KW-0234">DNA repair</keyword>
<keyword id="KW-0378">Hydrolase</keyword>
<keyword id="KW-1185">Reference proteome</keyword>
<dbReference type="EC" id="3.2.2.-" evidence="1"/>
<dbReference type="EMBL" id="AE000513">
    <property type="protein sequence ID" value="AAF11623.1"/>
    <property type="molecule type" value="Genomic_DNA"/>
</dbReference>
<dbReference type="PIR" id="D75319">
    <property type="entry name" value="D75319"/>
</dbReference>
<dbReference type="RefSeq" id="NP_295797.1">
    <property type="nucleotide sequence ID" value="NC_001263.1"/>
</dbReference>
<dbReference type="RefSeq" id="WP_010888705.1">
    <property type="nucleotide sequence ID" value="NZ_CP015081.1"/>
</dbReference>
<dbReference type="SMR" id="Q9RSQ0"/>
<dbReference type="FunCoup" id="Q9RSQ0">
    <property type="interactions" value="88"/>
</dbReference>
<dbReference type="STRING" id="243230.DR_2074"/>
<dbReference type="PaxDb" id="243230-DR_2074"/>
<dbReference type="EnsemblBacteria" id="AAF11623">
    <property type="protein sequence ID" value="AAF11623"/>
    <property type="gene ID" value="DR_2074"/>
</dbReference>
<dbReference type="KEGG" id="dra:DR_2074"/>
<dbReference type="PATRIC" id="fig|243230.17.peg.2299"/>
<dbReference type="eggNOG" id="COG2094">
    <property type="taxonomic scope" value="Bacteria"/>
</dbReference>
<dbReference type="HOGENOM" id="CLU_060471_4_1_0"/>
<dbReference type="InParanoid" id="Q9RSQ0"/>
<dbReference type="OrthoDB" id="9794313at2"/>
<dbReference type="Proteomes" id="UP000002524">
    <property type="component" value="Chromosome 1"/>
</dbReference>
<dbReference type="GO" id="GO:0003905">
    <property type="term" value="F:alkylbase DNA N-glycosylase activity"/>
    <property type="evidence" value="ECO:0000318"/>
    <property type="project" value="GO_Central"/>
</dbReference>
<dbReference type="GO" id="GO:0003677">
    <property type="term" value="F:DNA binding"/>
    <property type="evidence" value="ECO:0007669"/>
    <property type="project" value="InterPro"/>
</dbReference>
<dbReference type="GO" id="GO:0006284">
    <property type="term" value="P:base-excision repair"/>
    <property type="evidence" value="ECO:0000318"/>
    <property type="project" value="GO_Central"/>
</dbReference>
<dbReference type="CDD" id="cd00540">
    <property type="entry name" value="AAG"/>
    <property type="match status" value="1"/>
</dbReference>
<dbReference type="Gene3D" id="3.10.300.10">
    <property type="entry name" value="Methylpurine-DNA glycosylase (MPG)"/>
    <property type="match status" value="1"/>
</dbReference>
<dbReference type="HAMAP" id="MF_00527">
    <property type="entry name" value="3MGH"/>
    <property type="match status" value="1"/>
</dbReference>
<dbReference type="InterPro" id="IPR011034">
    <property type="entry name" value="Formyl_transferase-like_C_sf"/>
</dbReference>
<dbReference type="InterPro" id="IPR003180">
    <property type="entry name" value="MPG"/>
</dbReference>
<dbReference type="InterPro" id="IPR036995">
    <property type="entry name" value="MPG_sf"/>
</dbReference>
<dbReference type="NCBIfam" id="TIGR00567">
    <property type="entry name" value="3mg"/>
    <property type="match status" value="1"/>
</dbReference>
<dbReference type="PANTHER" id="PTHR10429">
    <property type="entry name" value="DNA-3-METHYLADENINE GLYCOSYLASE"/>
    <property type="match status" value="1"/>
</dbReference>
<dbReference type="PANTHER" id="PTHR10429:SF0">
    <property type="entry name" value="DNA-3-METHYLADENINE GLYCOSYLASE"/>
    <property type="match status" value="1"/>
</dbReference>
<dbReference type="Pfam" id="PF02245">
    <property type="entry name" value="Pur_DNA_glyco"/>
    <property type="match status" value="1"/>
</dbReference>
<dbReference type="SUPFAM" id="SSF50486">
    <property type="entry name" value="FMT C-terminal domain-like"/>
    <property type="match status" value="1"/>
</dbReference>
<name>3MGH_DEIRA</name>
<evidence type="ECO:0000255" key="1">
    <source>
        <dbReference type="HAMAP-Rule" id="MF_00527"/>
    </source>
</evidence>
<comment type="similarity">
    <text evidence="1">Belongs to the DNA glycosylase MPG family.</text>
</comment>
<sequence>MRLARELLGGTLVRVTPDGHRLSGRVVEVEAYDCPRDPACTAGRFHAARSAEMAIAPGHWLFWFAHGHPLLQVACRQEGVSASVLIRALEPLEGAGKMLDYRPVTRQRDLTSGPAKLVYALGLDPMQISHRPVNSPELHLLAPETPLADDEVTVTARVGIREGRNLPWRFLIRGNGWVSPAQPSMELAAP</sequence>
<reference key="1">
    <citation type="journal article" date="1999" name="Science">
        <title>Genome sequence of the radioresistant bacterium Deinococcus radiodurans R1.</title>
        <authorList>
            <person name="White O."/>
            <person name="Eisen J.A."/>
            <person name="Heidelberg J.F."/>
            <person name="Hickey E.K."/>
            <person name="Peterson J.D."/>
            <person name="Dodson R.J."/>
            <person name="Haft D.H."/>
            <person name="Gwinn M.L."/>
            <person name="Nelson W.C."/>
            <person name="Richardson D.L."/>
            <person name="Moffat K.S."/>
            <person name="Qin H."/>
            <person name="Jiang L."/>
            <person name="Pamphile W."/>
            <person name="Crosby M."/>
            <person name="Shen M."/>
            <person name="Vamathevan J.J."/>
            <person name="Lam P."/>
            <person name="McDonald L.A."/>
            <person name="Utterback T.R."/>
            <person name="Zalewski C."/>
            <person name="Makarova K.S."/>
            <person name="Aravind L."/>
            <person name="Daly M.J."/>
            <person name="Minton K.W."/>
            <person name="Fleischmann R.D."/>
            <person name="Ketchum K.A."/>
            <person name="Nelson K.E."/>
            <person name="Salzberg S.L."/>
            <person name="Smith H.O."/>
            <person name="Venter J.C."/>
            <person name="Fraser C.M."/>
        </authorList>
    </citation>
    <scope>NUCLEOTIDE SEQUENCE [LARGE SCALE GENOMIC DNA]</scope>
    <source>
        <strain>ATCC 13939 / DSM 20539 / JCM 16871 / CCUG 27074 / LMG 4051 / NBRC 15346 / NCIMB 9279 / VKM B-1422 / R1</strain>
    </source>
</reference>
<proteinExistence type="inferred from homology"/>
<feature type="chain" id="PRO_0000100085" description="Putative 3-methyladenine DNA glycosylase">
    <location>
        <begin position="1"/>
        <end position="190"/>
    </location>
</feature>
<gene>
    <name type="ordered locus">DR_2074</name>
</gene>